<accession>B4RQC9</accession>
<evidence type="ECO:0000255" key="1">
    <source>
        <dbReference type="HAMAP-Rule" id="MF_00038"/>
    </source>
</evidence>
<name>MRAY_NEIG2</name>
<gene>
    <name evidence="1" type="primary">mraY</name>
    <name type="ordered locus">NGK_1826</name>
</gene>
<feature type="chain" id="PRO_1000090648" description="Phospho-N-acetylmuramoyl-pentapeptide-transferase">
    <location>
        <begin position="1"/>
        <end position="360"/>
    </location>
</feature>
<feature type="transmembrane region" description="Helical" evidence="1">
    <location>
        <begin position="24"/>
        <end position="44"/>
    </location>
</feature>
<feature type="transmembrane region" description="Helical" evidence="1">
    <location>
        <begin position="69"/>
        <end position="89"/>
    </location>
</feature>
<feature type="transmembrane region" description="Helical" evidence="1">
    <location>
        <begin position="92"/>
        <end position="112"/>
    </location>
</feature>
<feature type="transmembrane region" description="Helical" evidence="1">
    <location>
        <begin position="133"/>
        <end position="153"/>
    </location>
</feature>
<feature type="transmembrane region" description="Helical" evidence="1">
    <location>
        <begin position="158"/>
        <end position="178"/>
    </location>
</feature>
<feature type="transmembrane region" description="Helical" evidence="1">
    <location>
        <begin position="199"/>
        <end position="219"/>
    </location>
</feature>
<feature type="transmembrane region" description="Helical" evidence="1">
    <location>
        <begin position="239"/>
        <end position="259"/>
    </location>
</feature>
<feature type="transmembrane region" description="Helical" evidence="1">
    <location>
        <begin position="263"/>
        <end position="283"/>
    </location>
</feature>
<feature type="transmembrane region" description="Helical" evidence="1">
    <location>
        <begin position="288"/>
        <end position="308"/>
    </location>
</feature>
<feature type="transmembrane region" description="Helical" evidence="1">
    <location>
        <begin position="337"/>
        <end position="357"/>
    </location>
</feature>
<organism>
    <name type="scientific">Neisseria gonorrhoeae (strain NCCP11945)</name>
    <dbReference type="NCBI Taxonomy" id="521006"/>
    <lineage>
        <taxon>Bacteria</taxon>
        <taxon>Pseudomonadati</taxon>
        <taxon>Pseudomonadota</taxon>
        <taxon>Betaproteobacteria</taxon>
        <taxon>Neisseriales</taxon>
        <taxon>Neisseriaceae</taxon>
        <taxon>Neisseria</taxon>
    </lineage>
</organism>
<protein>
    <recommendedName>
        <fullName evidence="1">Phospho-N-acetylmuramoyl-pentapeptide-transferase</fullName>
        <ecNumber evidence="1">2.7.8.13</ecNumber>
    </recommendedName>
    <alternativeName>
        <fullName evidence="1">UDP-MurNAc-pentapeptide phosphotransferase</fullName>
    </alternativeName>
</protein>
<dbReference type="EC" id="2.7.8.13" evidence="1"/>
<dbReference type="EMBL" id="CP001050">
    <property type="protein sequence ID" value="ACF30465.1"/>
    <property type="molecule type" value="Genomic_DNA"/>
</dbReference>
<dbReference type="RefSeq" id="WP_003689450.1">
    <property type="nucleotide sequence ID" value="NC_011035.1"/>
</dbReference>
<dbReference type="SMR" id="B4RQC9"/>
<dbReference type="GeneID" id="66753743"/>
<dbReference type="KEGG" id="ngk:NGK_1826"/>
<dbReference type="HOGENOM" id="CLU_023982_0_0_4"/>
<dbReference type="UniPathway" id="UPA00219"/>
<dbReference type="Proteomes" id="UP000002564">
    <property type="component" value="Chromosome"/>
</dbReference>
<dbReference type="GO" id="GO:0005886">
    <property type="term" value="C:plasma membrane"/>
    <property type="evidence" value="ECO:0007669"/>
    <property type="project" value="UniProtKB-SubCell"/>
</dbReference>
<dbReference type="GO" id="GO:0046872">
    <property type="term" value="F:metal ion binding"/>
    <property type="evidence" value="ECO:0007669"/>
    <property type="project" value="UniProtKB-KW"/>
</dbReference>
<dbReference type="GO" id="GO:0008963">
    <property type="term" value="F:phospho-N-acetylmuramoyl-pentapeptide-transferase activity"/>
    <property type="evidence" value="ECO:0007669"/>
    <property type="project" value="UniProtKB-UniRule"/>
</dbReference>
<dbReference type="GO" id="GO:0051992">
    <property type="term" value="F:UDP-N-acetylmuramoyl-L-alanyl-D-glutamyl-meso-2,6-diaminopimelyl-D-alanyl-D-alanine:undecaprenyl-phosphate transferase activity"/>
    <property type="evidence" value="ECO:0007669"/>
    <property type="project" value="RHEA"/>
</dbReference>
<dbReference type="GO" id="GO:0051301">
    <property type="term" value="P:cell division"/>
    <property type="evidence" value="ECO:0007669"/>
    <property type="project" value="UniProtKB-KW"/>
</dbReference>
<dbReference type="GO" id="GO:0071555">
    <property type="term" value="P:cell wall organization"/>
    <property type="evidence" value="ECO:0007669"/>
    <property type="project" value="UniProtKB-KW"/>
</dbReference>
<dbReference type="GO" id="GO:0009252">
    <property type="term" value="P:peptidoglycan biosynthetic process"/>
    <property type="evidence" value="ECO:0007669"/>
    <property type="project" value="UniProtKB-UniRule"/>
</dbReference>
<dbReference type="GO" id="GO:0008360">
    <property type="term" value="P:regulation of cell shape"/>
    <property type="evidence" value="ECO:0007669"/>
    <property type="project" value="UniProtKB-KW"/>
</dbReference>
<dbReference type="CDD" id="cd06852">
    <property type="entry name" value="GT_MraY"/>
    <property type="match status" value="1"/>
</dbReference>
<dbReference type="HAMAP" id="MF_00038">
    <property type="entry name" value="MraY"/>
    <property type="match status" value="1"/>
</dbReference>
<dbReference type="InterPro" id="IPR000715">
    <property type="entry name" value="Glycosyl_transferase_4"/>
</dbReference>
<dbReference type="InterPro" id="IPR003524">
    <property type="entry name" value="PNAcMuramoyl-5peptid_Trfase"/>
</dbReference>
<dbReference type="InterPro" id="IPR018480">
    <property type="entry name" value="PNAcMuramoyl-5peptid_Trfase_CS"/>
</dbReference>
<dbReference type="NCBIfam" id="TIGR00445">
    <property type="entry name" value="mraY"/>
    <property type="match status" value="1"/>
</dbReference>
<dbReference type="PANTHER" id="PTHR22926">
    <property type="entry name" value="PHOSPHO-N-ACETYLMURAMOYL-PENTAPEPTIDE-TRANSFERASE"/>
    <property type="match status" value="1"/>
</dbReference>
<dbReference type="PANTHER" id="PTHR22926:SF5">
    <property type="entry name" value="PHOSPHO-N-ACETYLMURAMOYL-PENTAPEPTIDE-TRANSFERASE HOMOLOG"/>
    <property type="match status" value="1"/>
</dbReference>
<dbReference type="Pfam" id="PF00953">
    <property type="entry name" value="Glycos_transf_4"/>
    <property type="match status" value="1"/>
</dbReference>
<dbReference type="PROSITE" id="PS01347">
    <property type="entry name" value="MRAY_1"/>
    <property type="match status" value="1"/>
</dbReference>
<dbReference type="PROSITE" id="PS01348">
    <property type="entry name" value="MRAY_2"/>
    <property type="match status" value="1"/>
</dbReference>
<comment type="function">
    <text evidence="1">Catalyzes the initial step of the lipid cycle reactions in the biosynthesis of the cell wall peptidoglycan: transfers peptidoglycan precursor phospho-MurNAc-pentapeptide from UDP-MurNAc-pentapeptide onto the lipid carrier undecaprenyl phosphate, yielding undecaprenyl-pyrophosphoryl-MurNAc-pentapeptide, known as lipid I.</text>
</comment>
<comment type="catalytic activity">
    <reaction evidence="1">
        <text>UDP-N-acetyl-alpha-D-muramoyl-L-alanyl-gamma-D-glutamyl-meso-2,6-diaminopimeloyl-D-alanyl-D-alanine + di-trans,octa-cis-undecaprenyl phosphate = di-trans,octa-cis-undecaprenyl diphospho-N-acetyl-alpha-D-muramoyl-L-alanyl-D-glutamyl-meso-2,6-diaminopimeloyl-D-alanyl-D-alanine + UMP</text>
        <dbReference type="Rhea" id="RHEA:28386"/>
        <dbReference type="ChEBI" id="CHEBI:57865"/>
        <dbReference type="ChEBI" id="CHEBI:60392"/>
        <dbReference type="ChEBI" id="CHEBI:61386"/>
        <dbReference type="ChEBI" id="CHEBI:61387"/>
        <dbReference type="EC" id="2.7.8.13"/>
    </reaction>
</comment>
<comment type="cofactor">
    <cofactor evidence="1">
        <name>Mg(2+)</name>
        <dbReference type="ChEBI" id="CHEBI:18420"/>
    </cofactor>
</comment>
<comment type="pathway">
    <text evidence="1">Cell wall biogenesis; peptidoglycan biosynthesis.</text>
</comment>
<comment type="subcellular location">
    <subcellularLocation>
        <location evidence="1">Cell inner membrane</location>
        <topology evidence="1">Multi-pass membrane protein</topology>
    </subcellularLocation>
</comment>
<comment type="similarity">
    <text evidence="1">Belongs to the glycosyltransferase 4 family. MraY subfamily.</text>
</comment>
<keyword id="KW-0131">Cell cycle</keyword>
<keyword id="KW-0132">Cell division</keyword>
<keyword id="KW-0997">Cell inner membrane</keyword>
<keyword id="KW-1003">Cell membrane</keyword>
<keyword id="KW-0133">Cell shape</keyword>
<keyword id="KW-0961">Cell wall biogenesis/degradation</keyword>
<keyword id="KW-0460">Magnesium</keyword>
<keyword id="KW-0472">Membrane</keyword>
<keyword id="KW-0479">Metal-binding</keyword>
<keyword id="KW-0573">Peptidoglycan synthesis</keyword>
<keyword id="KW-0808">Transferase</keyword>
<keyword id="KW-0812">Transmembrane</keyword>
<keyword id="KW-1133">Transmembrane helix</keyword>
<reference key="1">
    <citation type="journal article" date="2008" name="J. Bacteriol.">
        <title>Complete genome sequence of Neisseria gonorrhoeae NCCP11945.</title>
        <authorList>
            <person name="Chung G.T."/>
            <person name="Yoo J.S."/>
            <person name="Oh H.B."/>
            <person name="Lee Y.S."/>
            <person name="Cha S.H."/>
            <person name="Kim S.J."/>
            <person name="Yoo C.K."/>
        </authorList>
    </citation>
    <scope>NUCLEOTIDE SEQUENCE [LARGE SCALE GENOMIC DNA]</scope>
    <source>
        <strain>NCCP11945</strain>
    </source>
</reference>
<proteinExistence type="inferred from homology"/>
<sequence length="360" mass="39346">MFLWLAHFSNWLTGLNIFQYTTFRAVMAALTALAFSLMFGPWTIRRLTALKCGQAVRTDGPQTHLVKNGTPTMGGSLILTAITVSTLLWGNWANPYIWILLGVLLATGALGFYDDWRKVVYKDPNGVSAKFKMVWQSSVAVIAGLALFYLAANSANNILIVPFFKQIALPLGVVGFLVLSYLTIVGTSNAVNLTDGLDGLAAFPVVLVAAGLAIFAYVSGHYQFSQYLQLPYVAGANEVAIFCTAMCGACLGFLWFNAYPAQVFMGDVGALALGAALGTVAVIVRQEFVLVIMGGLFVVEAVSVMLQVGWYKKTKKRIFLMAPIHHHYEQKGWKETQVVVRFWIITIVLVLIGLSTLKIR</sequence>